<dbReference type="EC" id="7.1.1.-" evidence="1"/>
<dbReference type="EMBL" id="CP001144">
    <property type="protein sequence ID" value="ACH73711.1"/>
    <property type="molecule type" value="Genomic_DNA"/>
</dbReference>
<dbReference type="RefSeq" id="WP_000386728.1">
    <property type="nucleotide sequence ID" value="NC_011205.1"/>
</dbReference>
<dbReference type="SMR" id="B5FPG8"/>
<dbReference type="KEGG" id="sed:SeD_A2673"/>
<dbReference type="HOGENOM" id="CLU_055737_7_3_6"/>
<dbReference type="Proteomes" id="UP000008322">
    <property type="component" value="Chromosome"/>
</dbReference>
<dbReference type="GO" id="GO:0005886">
    <property type="term" value="C:plasma membrane"/>
    <property type="evidence" value="ECO:0007669"/>
    <property type="project" value="UniProtKB-SubCell"/>
</dbReference>
<dbReference type="GO" id="GO:0045271">
    <property type="term" value="C:respiratory chain complex I"/>
    <property type="evidence" value="ECO:0007669"/>
    <property type="project" value="TreeGrafter"/>
</dbReference>
<dbReference type="GO" id="GO:0051539">
    <property type="term" value="F:4 iron, 4 sulfur cluster binding"/>
    <property type="evidence" value="ECO:0007669"/>
    <property type="project" value="UniProtKB-KW"/>
</dbReference>
<dbReference type="GO" id="GO:0005506">
    <property type="term" value="F:iron ion binding"/>
    <property type="evidence" value="ECO:0007669"/>
    <property type="project" value="UniProtKB-UniRule"/>
</dbReference>
<dbReference type="GO" id="GO:0008137">
    <property type="term" value="F:NADH dehydrogenase (ubiquinone) activity"/>
    <property type="evidence" value="ECO:0007669"/>
    <property type="project" value="InterPro"/>
</dbReference>
<dbReference type="GO" id="GO:0050136">
    <property type="term" value="F:NADH:ubiquinone reductase (non-electrogenic) activity"/>
    <property type="evidence" value="ECO:0007669"/>
    <property type="project" value="UniProtKB-UniRule"/>
</dbReference>
<dbReference type="GO" id="GO:0048038">
    <property type="term" value="F:quinone binding"/>
    <property type="evidence" value="ECO:0007669"/>
    <property type="project" value="UniProtKB-KW"/>
</dbReference>
<dbReference type="GO" id="GO:0009060">
    <property type="term" value="P:aerobic respiration"/>
    <property type="evidence" value="ECO:0007669"/>
    <property type="project" value="TreeGrafter"/>
</dbReference>
<dbReference type="GO" id="GO:0015990">
    <property type="term" value="P:electron transport coupled proton transport"/>
    <property type="evidence" value="ECO:0007669"/>
    <property type="project" value="TreeGrafter"/>
</dbReference>
<dbReference type="FunFam" id="3.40.50.12280:FF:000002">
    <property type="entry name" value="NADH-quinone oxidoreductase subunit B"/>
    <property type="match status" value="1"/>
</dbReference>
<dbReference type="Gene3D" id="3.40.50.12280">
    <property type="match status" value="1"/>
</dbReference>
<dbReference type="HAMAP" id="MF_01356">
    <property type="entry name" value="NDH1_NuoB"/>
    <property type="match status" value="1"/>
</dbReference>
<dbReference type="InterPro" id="IPR006137">
    <property type="entry name" value="NADH_UbQ_OxRdtase-like_20kDa"/>
</dbReference>
<dbReference type="InterPro" id="IPR006138">
    <property type="entry name" value="NADH_UQ_OxRdtase_20Kd_su"/>
</dbReference>
<dbReference type="NCBIfam" id="TIGR01957">
    <property type="entry name" value="nuoB_fam"/>
    <property type="match status" value="1"/>
</dbReference>
<dbReference type="NCBIfam" id="NF005012">
    <property type="entry name" value="PRK06411.1"/>
    <property type="match status" value="1"/>
</dbReference>
<dbReference type="PANTHER" id="PTHR11995">
    <property type="entry name" value="NADH DEHYDROGENASE"/>
    <property type="match status" value="1"/>
</dbReference>
<dbReference type="PANTHER" id="PTHR11995:SF14">
    <property type="entry name" value="NADH DEHYDROGENASE [UBIQUINONE] IRON-SULFUR PROTEIN 7, MITOCHONDRIAL"/>
    <property type="match status" value="1"/>
</dbReference>
<dbReference type="Pfam" id="PF01058">
    <property type="entry name" value="Oxidored_q6"/>
    <property type="match status" value="1"/>
</dbReference>
<dbReference type="SUPFAM" id="SSF56770">
    <property type="entry name" value="HydA/Nqo6-like"/>
    <property type="match status" value="1"/>
</dbReference>
<dbReference type="PROSITE" id="PS01150">
    <property type="entry name" value="COMPLEX1_20K"/>
    <property type="match status" value="1"/>
</dbReference>
<organism>
    <name type="scientific">Salmonella dublin (strain CT_02021853)</name>
    <dbReference type="NCBI Taxonomy" id="439851"/>
    <lineage>
        <taxon>Bacteria</taxon>
        <taxon>Pseudomonadati</taxon>
        <taxon>Pseudomonadota</taxon>
        <taxon>Gammaproteobacteria</taxon>
        <taxon>Enterobacterales</taxon>
        <taxon>Enterobacteriaceae</taxon>
        <taxon>Salmonella</taxon>
    </lineage>
</organism>
<gene>
    <name evidence="1" type="primary">nuoB</name>
    <name type="ordered locus">SeD_A2673</name>
</gene>
<name>NUOB_SALDC</name>
<proteinExistence type="inferred from homology"/>
<keyword id="KW-0004">4Fe-4S</keyword>
<keyword id="KW-0997">Cell inner membrane</keyword>
<keyword id="KW-1003">Cell membrane</keyword>
<keyword id="KW-0408">Iron</keyword>
<keyword id="KW-0411">Iron-sulfur</keyword>
<keyword id="KW-0472">Membrane</keyword>
<keyword id="KW-0479">Metal-binding</keyword>
<keyword id="KW-0520">NAD</keyword>
<keyword id="KW-0874">Quinone</keyword>
<keyword id="KW-1278">Translocase</keyword>
<keyword id="KW-0813">Transport</keyword>
<keyword id="KW-0830">Ubiquinone</keyword>
<sequence>MDYTLTRIDPNGENDRYPLQKQEIVTDPLEQEVNKNVFMGKLHDMVNWGRKNSIWPYNFGLSCCYVEMVTSFTAVHDVARFGAEVLRASPRQADLMVVAGTCFTKMAPVIQRLYDQMLEPKWVISMGACANSGGMYDIYSVVQGVDKFIPVDVYIPGCPPRPEAYMQALMLLQESIGKERRPLSWVVGDQGVYRANMQPERERKRGERIAVTNLRTPDEI</sequence>
<protein>
    <recommendedName>
        <fullName evidence="1">NADH-quinone oxidoreductase subunit B</fullName>
        <ecNumber evidence="1">7.1.1.-</ecNumber>
    </recommendedName>
    <alternativeName>
        <fullName evidence="1">NADH dehydrogenase I subunit B</fullName>
    </alternativeName>
    <alternativeName>
        <fullName evidence="1">NDH-1 subunit B</fullName>
    </alternativeName>
</protein>
<reference key="1">
    <citation type="journal article" date="2011" name="J. Bacteriol.">
        <title>Comparative genomics of 28 Salmonella enterica isolates: evidence for CRISPR-mediated adaptive sublineage evolution.</title>
        <authorList>
            <person name="Fricke W.F."/>
            <person name="Mammel M.K."/>
            <person name="McDermott P.F."/>
            <person name="Tartera C."/>
            <person name="White D.G."/>
            <person name="Leclerc J.E."/>
            <person name="Ravel J."/>
            <person name="Cebula T.A."/>
        </authorList>
    </citation>
    <scope>NUCLEOTIDE SEQUENCE [LARGE SCALE GENOMIC DNA]</scope>
    <source>
        <strain>CT_02021853</strain>
    </source>
</reference>
<comment type="function">
    <text evidence="1">NDH-1 shuttles electrons from NADH, via FMN and iron-sulfur (Fe-S) centers, to quinones in the respiratory chain. The immediate electron acceptor for the enzyme in this species is believed to be ubiquinone. Couples the redox reaction to proton translocation (for every two electrons transferred, four hydrogen ions are translocated across the cytoplasmic membrane), and thus conserves the redox energy in a proton gradient.</text>
</comment>
<comment type="catalytic activity">
    <reaction evidence="1">
        <text>a quinone + NADH + 5 H(+)(in) = a quinol + NAD(+) + 4 H(+)(out)</text>
        <dbReference type="Rhea" id="RHEA:57888"/>
        <dbReference type="ChEBI" id="CHEBI:15378"/>
        <dbReference type="ChEBI" id="CHEBI:24646"/>
        <dbReference type="ChEBI" id="CHEBI:57540"/>
        <dbReference type="ChEBI" id="CHEBI:57945"/>
        <dbReference type="ChEBI" id="CHEBI:132124"/>
    </reaction>
</comment>
<comment type="cofactor">
    <cofactor evidence="1">
        <name>[4Fe-4S] cluster</name>
        <dbReference type="ChEBI" id="CHEBI:49883"/>
    </cofactor>
    <text evidence="1">Binds 1 [4Fe-4S] cluster.</text>
</comment>
<comment type="subunit">
    <text evidence="1">NDH-1 is composed of 13 different subunits. Subunits NuoB, CD, E, F, and G constitute the peripheral sector of the complex.</text>
</comment>
<comment type="subcellular location">
    <subcellularLocation>
        <location evidence="1">Cell inner membrane</location>
        <topology evidence="1">Peripheral membrane protein</topology>
        <orientation evidence="1">Cytoplasmic side</orientation>
    </subcellularLocation>
</comment>
<comment type="similarity">
    <text evidence="1">Belongs to the complex I 20 kDa subunit family.</text>
</comment>
<accession>B5FPG8</accession>
<evidence type="ECO:0000255" key="1">
    <source>
        <dbReference type="HAMAP-Rule" id="MF_01356"/>
    </source>
</evidence>
<feature type="chain" id="PRO_0000376362" description="NADH-quinone oxidoreductase subunit B">
    <location>
        <begin position="1"/>
        <end position="220"/>
    </location>
</feature>
<feature type="binding site" evidence="1">
    <location>
        <position position="63"/>
    </location>
    <ligand>
        <name>[4Fe-4S] cluster</name>
        <dbReference type="ChEBI" id="CHEBI:49883"/>
    </ligand>
</feature>
<feature type="binding site" evidence="1">
    <location>
        <position position="64"/>
    </location>
    <ligand>
        <name>[4Fe-4S] cluster</name>
        <dbReference type="ChEBI" id="CHEBI:49883"/>
    </ligand>
</feature>
<feature type="binding site" evidence="1">
    <location>
        <position position="129"/>
    </location>
    <ligand>
        <name>[4Fe-4S] cluster</name>
        <dbReference type="ChEBI" id="CHEBI:49883"/>
    </ligand>
</feature>
<feature type="binding site" evidence="1">
    <location>
        <position position="158"/>
    </location>
    <ligand>
        <name>[4Fe-4S] cluster</name>
        <dbReference type="ChEBI" id="CHEBI:49883"/>
    </ligand>
</feature>